<proteinExistence type="inferred from homology"/>
<keyword id="KW-0963">Cytoplasm</keyword>
<keyword id="KW-0251">Elongation factor</keyword>
<keyword id="KW-0342">GTP-binding</keyword>
<keyword id="KW-0378">Hydrolase</keyword>
<keyword id="KW-0460">Magnesium</keyword>
<keyword id="KW-0479">Metal-binding</keyword>
<keyword id="KW-0547">Nucleotide-binding</keyword>
<keyword id="KW-0648">Protein biosynthesis</keyword>
<keyword id="KW-1185">Reference proteome</keyword>
<name>EF1A_PYRAE</name>
<accession>O93729</accession>
<feature type="chain" id="PRO_0000090987" description="Elongation factor 1-alpha">
    <location>
        <begin position="1"/>
        <end position="444"/>
    </location>
</feature>
<feature type="domain" description="tr-type G">
    <location>
        <begin position="15"/>
        <end position="238"/>
    </location>
</feature>
<feature type="region of interest" description="G1" evidence="1">
    <location>
        <begin position="24"/>
        <end position="31"/>
    </location>
</feature>
<feature type="region of interest" description="G2" evidence="1">
    <location>
        <begin position="80"/>
        <end position="84"/>
    </location>
</feature>
<feature type="region of interest" description="G3" evidence="1">
    <location>
        <begin position="101"/>
        <end position="104"/>
    </location>
</feature>
<feature type="region of interest" description="G4" evidence="1">
    <location>
        <begin position="163"/>
        <end position="166"/>
    </location>
</feature>
<feature type="region of interest" description="G5" evidence="1">
    <location>
        <begin position="202"/>
        <end position="204"/>
    </location>
</feature>
<feature type="binding site" evidence="2">
    <location>
        <begin position="24"/>
        <end position="31"/>
    </location>
    <ligand>
        <name>GTP</name>
        <dbReference type="ChEBI" id="CHEBI:37565"/>
    </ligand>
</feature>
<feature type="binding site" evidence="2">
    <location>
        <position position="31"/>
    </location>
    <ligand>
        <name>Mg(2+)</name>
        <dbReference type="ChEBI" id="CHEBI:18420"/>
    </ligand>
</feature>
<feature type="binding site" evidence="2">
    <location>
        <begin position="101"/>
        <end position="105"/>
    </location>
    <ligand>
        <name>GTP</name>
        <dbReference type="ChEBI" id="CHEBI:37565"/>
    </ligand>
</feature>
<feature type="binding site" evidence="2">
    <location>
        <begin position="163"/>
        <end position="166"/>
    </location>
    <ligand>
        <name>GTP</name>
        <dbReference type="ChEBI" id="CHEBI:37565"/>
    </ligand>
</feature>
<organism>
    <name type="scientific">Pyrobaculum aerophilum (strain ATCC 51768 / DSM 7523 / JCM 9630 / CIP 104966 / NBRC 100827 / IM2)</name>
    <dbReference type="NCBI Taxonomy" id="178306"/>
    <lineage>
        <taxon>Archaea</taxon>
        <taxon>Thermoproteota</taxon>
        <taxon>Thermoprotei</taxon>
        <taxon>Thermoproteales</taxon>
        <taxon>Thermoproteaceae</taxon>
        <taxon>Pyrobaculum</taxon>
    </lineage>
</organism>
<dbReference type="EC" id="3.6.5.3" evidence="2"/>
<dbReference type="EMBL" id="U94347">
    <property type="protein sequence ID" value="AAD09252.1"/>
    <property type="molecule type" value="Genomic_DNA"/>
</dbReference>
<dbReference type="EMBL" id="AE009441">
    <property type="protein sequence ID" value="AAL64600.1"/>
    <property type="molecule type" value="Genomic_DNA"/>
</dbReference>
<dbReference type="PIR" id="T44963">
    <property type="entry name" value="T44963"/>
</dbReference>
<dbReference type="RefSeq" id="WP_011009068.1">
    <property type="nucleotide sequence ID" value="NC_003364.1"/>
</dbReference>
<dbReference type="SMR" id="O93729"/>
<dbReference type="FunCoup" id="O93729">
    <property type="interactions" value="119"/>
</dbReference>
<dbReference type="STRING" id="178306.PAE3000"/>
<dbReference type="EnsemblBacteria" id="AAL64600">
    <property type="protein sequence ID" value="AAL64600"/>
    <property type="gene ID" value="PAE3000"/>
</dbReference>
<dbReference type="GeneID" id="1463765"/>
<dbReference type="KEGG" id="pai:PAE3000"/>
<dbReference type="PATRIC" id="fig|178306.9.peg.2251"/>
<dbReference type="eggNOG" id="arCOG01561">
    <property type="taxonomic scope" value="Archaea"/>
</dbReference>
<dbReference type="HOGENOM" id="CLU_007265_3_5_2"/>
<dbReference type="InParanoid" id="O93729"/>
<dbReference type="Proteomes" id="UP000002439">
    <property type="component" value="Chromosome"/>
</dbReference>
<dbReference type="GO" id="GO:0005737">
    <property type="term" value="C:cytoplasm"/>
    <property type="evidence" value="ECO:0007669"/>
    <property type="project" value="UniProtKB-SubCell"/>
</dbReference>
<dbReference type="GO" id="GO:0005525">
    <property type="term" value="F:GTP binding"/>
    <property type="evidence" value="ECO:0007669"/>
    <property type="project" value="UniProtKB-UniRule"/>
</dbReference>
<dbReference type="GO" id="GO:0003924">
    <property type="term" value="F:GTPase activity"/>
    <property type="evidence" value="ECO:0007669"/>
    <property type="project" value="InterPro"/>
</dbReference>
<dbReference type="GO" id="GO:0003746">
    <property type="term" value="F:translation elongation factor activity"/>
    <property type="evidence" value="ECO:0007669"/>
    <property type="project" value="UniProtKB-UniRule"/>
</dbReference>
<dbReference type="CDD" id="cd01883">
    <property type="entry name" value="EF1_alpha"/>
    <property type="match status" value="1"/>
</dbReference>
<dbReference type="CDD" id="cd03693">
    <property type="entry name" value="EF1_alpha_II"/>
    <property type="match status" value="1"/>
</dbReference>
<dbReference type="CDD" id="cd03705">
    <property type="entry name" value="EF1_alpha_III"/>
    <property type="match status" value="1"/>
</dbReference>
<dbReference type="FunFam" id="2.40.30.10:FF:000005">
    <property type="entry name" value="Elongation factor 1-alpha"/>
    <property type="match status" value="1"/>
</dbReference>
<dbReference type="FunFam" id="2.40.30.10:FF:000020">
    <property type="entry name" value="Translation elongation factor EF-1"/>
    <property type="match status" value="1"/>
</dbReference>
<dbReference type="FunFam" id="3.40.50.300:FF:000204">
    <property type="entry name" value="Translation elongation factor Tu"/>
    <property type="match status" value="1"/>
</dbReference>
<dbReference type="Gene3D" id="3.40.50.300">
    <property type="entry name" value="P-loop containing nucleotide triphosphate hydrolases"/>
    <property type="match status" value="1"/>
</dbReference>
<dbReference type="Gene3D" id="2.40.30.10">
    <property type="entry name" value="Translation factors"/>
    <property type="match status" value="2"/>
</dbReference>
<dbReference type="HAMAP" id="MF_00118_A">
    <property type="entry name" value="EF_Tu_A"/>
    <property type="match status" value="1"/>
</dbReference>
<dbReference type="InterPro" id="IPR004161">
    <property type="entry name" value="EFTu-like_2"/>
</dbReference>
<dbReference type="InterPro" id="IPR029459">
    <property type="entry name" value="EFTU-type"/>
</dbReference>
<dbReference type="InterPro" id="IPR031157">
    <property type="entry name" value="G_TR_CS"/>
</dbReference>
<dbReference type="InterPro" id="IPR054696">
    <property type="entry name" value="GTP-eEF1A_C"/>
</dbReference>
<dbReference type="InterPro" id="IPR027417">
    <property type="entry name" value="P-loop_NTPase"/>
</dbReference>
<dbReference type="InterPro" id="IPR000795">
    <property type="entry name" value="T_Tr_GTP-bd_dom"/>
</dbReference>
<dbReference type="InterPro" id="IPR050100">
    <property type="entry name" value="TRAFAC_GTPase_members"/>
</dbReference>
<dbReference type="InterPro" id="IPR009000">
    <property type="entry name" value="Transl_B-barrel_sf"/>
</dbReference>
<dbReference type="InterPro" id="IPR009001">
    <property type="entry name" value="Transl_elong_EF1A/Init_IF2_C"/>
</dbReference>
<dbReference type="InterPro" id="IPR004539">
    <property type="entry name" value="Transl_elong_EF1A_euk/arc"/>
</dbReference>
<dbReference type="NCBIfam" id="TIGR00483">
    <property type="entry name" value="EF-1_alpha"/>
    <property type="match status" value="1"/>
</dbReference>
<dbReference type="NCBIfam" id="NF008969">
    <property type="entry name" value="PRK12317.1"/>
    <property type="match status" value="1"/>
</dbReference>
<dbReference type="PANTHER" id="PTHR23115">
    <property type="entry name" value="TRANSLATION FACTOR"/>
    <property type="match status" value="1"/>
</dbReference>
<dbReference type="Pfam" id="PF22594">
    <property type="entry name" value="GTP-eEF1A_C"/>
    <property type="match status" value="1"/>
</dbReference>
<dbReference type="Pfam" id="PF00009">
    <property type="entry name" value="GTP_EFTU"/>
    <property type="match status" value="1"/>
</dbReference>
<dbReference type="Pfam" id="PF03144">
    <property type="entry name" value="GTP_EFTU_D2"/>
    <property type="match status" value="1"/>
</dbReference>
<dbReference type="Pfam" id="PF14578">
    <property type="entry name" value="GTP_EFTU_D4"/>
    <property type="match status" value="1"/>
</dbReference>
<dbReference type="PRINTS" id="PR00315">
    <property type="entry name" value="ELONGATNFCT"/>
</dbReference>
<dbReference type="SUPFAM" id="SSF50465">
    <property type="entry name" value="EF-Tu/eEF-1alpha/eIF2-gamma C-terminal domain"/>
    <property type="match status" value="1"/>
</dbReference>
<dbReference type="SUPFAM" id="SSF52540">
    <property type="entry name" value="P-loop containing nucleoside triphosphate hydrolases"/>
    <property type="match status" value="1"/>
</dbReference>
<dbReference type="SUPFAM" id="SSF50447">
    <property type="entry name" value="Translation proteins"/>
    <property type="match status" value="1"/>
</dbReference>
<dbReference type="PROSITE" id="PS00301">
    <property type="entry name" value="G_TR_1"/>
    <property type="match status" value="1"/>
</dbReference>
<dbReference type="PROSITE" id="PS51722">
    <property type="entry name" value="G_TR_2"/>
    <property type="match status" value="1"/>
</dbReference>
<reference key="1">
    <citation type="submission" date="1997-03" db="EMBL/GenBank/DDBJ databases">
        <title>Pyrobaculum aerophilum putative elongation factor EF-1alpha.</title>
        <authorList>
            <person name="Fitz-Gibbon S."/>
            <person name="Choi A.J."/>
        </authorList>
    </citation>
    <scope>NUCLEOTIDE SEQUENCE [GENOMIC DNA]</scope>
</reference>
<reference key="2">
    <citation type="journal article" date="2002" name="Proc. Natl. Acad. Sci. U.S.A.">
        <title>Genome sequence of the hyperthermophilic crenarchaeon Pyrobaculum aerophilum.</title>
        <authorList>
            <person name="Fitz-Gibbon S.T."/>
            <person name="Ladner H."/>
            <person name="Kim U.-J."/>
            <person name="Stetter K.O."/>
            <person name="Simon M.I."/>
            <person name="Miller J.H."/>
        </authorList>
    </citation>
    <scope>NUCLEOTIDE SEQUENCE [LARGE SCALE GENOMIC DNA]</scope>
    <source>
        <strain>ATCC 51768 / DSM 7523 / JCM 9630 / CIP 104966 / NBRC 100827 / IM2</strain>
    </source>
</reference>
<sequence>MPSIILPPKPTALQKPHINLAVVGHVDNGKSTLVGRLLYETGYVDEKALKEIEEMAKKIGKEDFAFAWILDRFKEERERGVTIEATHVGFETNKLFITIIDLPGHRDFVKNMIVGASQADAALFVISARPGEFEAAIGPQGQGREHLFLIRTLGVQQIVVAVNKMDVVNYDQKRYEQVKAEVSKLLKLLGYDPSKIHFIPVSAIKGDNIKTKSSNTPWYTGPTLLEVFDSFQPPQRPVDKPLRMPIQDVFTITGAGTVVVGRVETGVLKVGDRVVIVPPAKVGDVRSIETHHMKLEQAQPGDNIGVNVRGIAKEDVKRGDVLGKPDNVPTVAEEIVARIVVLWHPTAIGPGYAPVMHIHTATVPVQITELVSKLDPRTGQAVEQKPQFIKQGDVAIVKIKPLKPVVAEKFSDFPPLGRFALRDMGRTIAAGQILEVKPAQVQIK</sequence>
<protein>
    <recommendedName>
        <fullName evidence="2">Elongation factor 1-alpha</fullName>
        <shortName evidence="2">EF-1-alpha</shortName>
        <ecNumber evidence="2">3.6.5.3</ecNumber>
    </recommendedName>
    <alternativeName>
        <fullName evidence="2">Elongation factor Tu</fullName>
        <shortName evidence="2">EF-Tu</shortName>
    </alternativeName>
</protein>
<gene>
    <name evidence="2" type="primary">tuf</name>
    <name type="ordered locus">PAE3000</name>
</gene>
<comment type="function">
    <text evidence="2">GTP hydrolase that promotes the GTP-dependent binding of aminoacyl-tRNA to the A-site of ribosomes during protein biosynthesis.</text>
</comment>
<comment type="catalytic activity">
    <reaction evidence="2">
        <text>GTP + H2O = GDP + phosphate + H(+)</text>
        <dbReference type="Rhea" id="RHEA:19669"/>
        <dbReference type="ChEBI" id="CHEBI:15377"/>
        <dbReference type="ChEBI" id="CHEBI:15378"/>
        <dbReference type="ChEBI" id="CHEBI:37565"/>
        <dbReference type="ChEBI" id="CHEBI:43474"/>
        <dbReference type="ChEBI" id="CHEBI:58189"/>
        <dbReference type="EC" id="3.6.5.3"/>
    </reaction>
    <physiologicalReaction direction="left-to-right" evidence="2">
        <dbReference type="Rhea" id="RHEA:19670"/>
    </physiologicalReaction>
</comment>
<comment type="subcellular location">
    <subcellularLocation>
        <location evidence="2">Cytoplasm</location>
    </subcellularLocation>
</comment>
<comment type="similarity">
    <text evidence="2">Belongs to the TRAFAC class translation factor GTPase superfamily. Classic translation factor GTPase family. EF-Tu/EF-1A subfamily.</text>
</comment>
<evidence type="ECO:0000250" key="1"/>
<evidence type="ECO:0000255" key="2">
    <source>
        <dbReference type="HAMAP-Rule" id="MF_00118"/>
    </source>
</evidence>